<comment type="function">
    <text evidence="1">Catalyzes the methyl esterification of L-isoaspartyl residues in peptides and proteins that result from spontaneous decomposition of normal L-aspartyl and L-asparaginyl residues. It plays a role in the repair and/or degradation of damaged proteins.</text>
</comment>
<comment type="catalytic activity">
    <reaction evidence="1">
        <text>[protein]-L-isoaspartate + S-adenosyl-L-methionine = [protein]-L-isoaspartate alpha-methyl ester + S-adenosyl-L-homocysteine</text>
        <dbReference type="Rhea" id="RHEA:12705"/>
        <dbReference type="Rhea" id="RHEA-COMP:12143"/>
        <dbReference type="Rhea" id="RHEA-COMP:12144"/>
        <dbReference type="ChEBI" id="CHEBI:57856"/>
        <dbReference type="ChEBI" id="CHEBI:59789"/>
        <dbReference type="ChEBI" id="CHEBI:90596"/>
        <dbReference type="ChEBI" id="CHEBI:90598"/>
        <dbReference type="EC" id="2.1.1.77"/>
    </reaction>
</comment>
<comment type="subcellular location">
    <subcellularLocation>
        <location evidence="1">Cytoplasm</location>
    </subcellularLocation>
</comment>
<comment type="similarity">
    <text evidence="1">Belongs to the methyltransferase superfamily. L-isoaspartyl/D-aspartyl protein methyltransferase family.</text>
</comment>
<evidence type="ECO:0000255" key="1">
    <source>
        <dbReference type="HAMAP-Rule" id="MF_00090"/>
    </source>
</evidence>
<proteinExistence type="inferred from homology"/>
<dbReference type="EC" id="2.1.1.77" evidence="1"/>
<dbReference type="EMBL" id="CP000951">
    <property type="protein sequence ID" value="ACA98683.1"/>
    <property type="molecule type" value="Genomic_DNA"/>
</dbReference>
<dbReference type="RefSeq" id="WP_012306307.1">
    <property type="nucleotide sequence ID" value="NZ_JAHHPU010000001.1"/>
</dbReference>
<dbReference type="SMR" id="B1XQE1"/>
<dbReference type="STRING" id="32049.SYNPCC7002_A0678"/>
<dbReference type="KEGG" id="syp:SYNPCC7002_A0678"/>
<dbReference type="eggNOG" id="COG2518">
    <property type="taxonomic scope" value="Bacteria"/>
</dbReference>
<dbReference type="HOGENOM" id="CLU_055432_2_0_3"/>
<dbReference type="Proteomes" id="UP000001688">
    <property type="component" value="Chromosome"/>
</dbReference>
<dbReference type="GO" id="GO:0005737">
    <property type="term" value="C:cytoplasm"/>
    <property type="evidence" value="ECO:0007669"/>
    <property type="project" value="UniProtKB-SubCell"/>
</dbReference>
<dbReference type="GO" id="GO:0004719">
    <property type="term" value="F:protein-L-isoaspartate (D-aspartate) O-methyltransferase activity"/>
    <property type="evidence" value="ECO:0007669"/>
    <property type="project" value="UniProtKB-UniRule"/>
</dbReference>
<dbReference type="GO" id="GO:0032259">
    <property type="term" value="P:methylation"/>
    <property type="evidence" value="ECO:0007669"/>
    <property type="project" value="UniProtKB-KW"/>
</dbReference>
<dbReference type="GO" id="GO:0036211">
    <property type="term" value="P:protein modification process"/>
    <property type="evidence" value="ECO:0007669"/>
    <property type="project" value="UniProtKB-UniRule"/>
</dbReference>
<dbReference type="GO" id="GO:0030091">
    <property type="term" value="P:protein repair"/>
    <property type="evidence" value="ECO:0007669"/>
    <property type="project" value="UniProtKB-UniRule"/>
</dbReference>
<dbReference type="CDD" id="cd02440">
    <property type="entry name" value="AdoMet_MTases"/>
    <property type="match status" value="1"/>
</dbReference>
<dbReference type="FunFam" id="3.40.50.150:FF:000010">
    <property type="entry name" value="Protein-L-isoaspartate O-methyltransferase"/>
    <property type="match status" value="1"/>
</dbReference>
<dbReference type="Gene3D" id="3.40.50.150">
    <property type="entry name" value="Vaccinia Virus protein VP39"/>
    <property type="match status" value="1"/>
</dbReference>
<dbReference type="HAMAP" id="MF_00090">
    <property type="entry name" value="PIMT"/>
    <property type="match status" value="1"/>
</dbReference>
<dbReference type="InterPro" id="IPR000682">
    <property type="entry name" value="PCMT"/>
</dbReference>
<dbReference type="InterPro" id="IPR029063">
    <property type="entry name" value="SAM-dependent_MTases_sf"/>
</dbReference>
<dbReference type="NCBIfam" id="TIGR00080">
    <property type="entry name" value="pimt"/>
    <property type="match status" value="1"/>
</dbReference>
<dbReference type="NCBIfam" id="NF001453">
    <property type="entry name" value="PRK00312.1"/>
    <property type="match status" value="1"/>
</dbReference>
<dbReference type="PANTHER" id="PTHR11579">
    <property type="entry name" value="PROTEIN-L-ISOASPARTATE O-METHYLTRANSFERASE"/>
    <property type="match status" value="1"/>
</dbReference>
<dbReference type="PANTHER" id="PTHR11579:SF0">
    <property type="entry name" value="PROTEIN-L-ISOASPARTATE(D-ASPARTATE) O-METHYLTRANSFERASE"/>
    <property type="match status" value="1"/>
</dbReference>
<dbReference type="Pfam" id="PF01135">
    <property type="entry name" value="PCMT"/>
    <property type="match status" value="1"/>
</dbReference>
<dbReference type="SUPFAM" id="SSF53335">
    <property type="entry name" value="S-adenosyl-L-methionine-dependent methyltransferases"/>
    <property type="match status" value="1"/>
</dbReference>
<dbReference type="PROSITE" id="PS01279">
    <property type="entry name" value="PCMT"/>
    <property type="match status" value="1"/>
</dbReference>
<organism>
    <name type="scientific">Picosynechococcus sp. (strain ATCC 27264 / PCC 7002 / PR-6)</name>
    <name type="common">Agmenellum quadruplicatum</name>
    <dbReference type="NCBI Taxonomy" id="32049"/>
    <lineage>
        <taxon>Bacteria</taxon>
        <taxon>Bacillati</taxon>
        <taxon>Cyanobacteriota</taxon>
        <taxon>Cyanophyceae</taxon>
        <taxon>Oscillatoriophycideae</taxon>
        <taxon>Chroococcales</taxon>
        <taxon>Geminocystaceae</taxon>
        <taxon>Picosynechococcus</taxon>
    </lineage>
</organism>
<name>PIMT_PICP2</name>
<gene>
    <name evidence="1" type="primary">pcm</name>
    <name type="ordered locus">SYNPCC7002_A0678</name>
</gene>
<sequence>MDLPPTNDFCADPTVALRQRMVKQQIIARGVNDPAVLAALQQVPRHRFVPDSLQNLAYADQPLTIGYGQTISQPYIVAYMTEAAHLTPSSKVLEIGTGCGYQAAILAEIAQEVFTVEVVPELARQARDRLEALGYQNIHYKIGDGYQGWSEFAPYDAILVTAAPDHRPQPLLQQLAVGGHLVIPVGTVGQRLEVLHKTSTDLEMEKAIAVRFVPLQGHSYGF</sequence>
<feature type="chain" id="PRO_0000351942" description="Protein-L-isoaspartate O-methyltransferase">
    <location>
        <begin position="1"/>
        <end position="222"/>
    </location>
</feature>
<feature type="active site" evidence="1">
    <location>
        <position position="72"/>
    </location>
</feature>
<keyword id="KW-0963">Cytoplasm</keyword>
<keyword id="KW-0489">Methyltransferase</keyword>
<keyword id="KW-1185">Reference proteome</keyword>
<keyword id="KW-0949">S-adenosyl-L-methionine</keyword>
<keyword id="KW-0808">Transferase</keyword>
<reference key="1">
    <citation type="submission" date="2008-02" db="EMBL/GenBank/DDBJ databases">
        <title>Complete sequence of Synechococcus sp. PCC 7002.</title>
        <authorList>
            <person name="Li T."/>
            <person name="Zhao J."/>
            <person name="Zhao C."/>
            <person name="Liu Z."/>
            <person name="Zhao F."/>
            <person name="Marquardt J."/>
            <person name="Nomura C.T."/>
            <person name="Persson S."/>
            <person name="Detter J.C."/>
            <person name="Richardson P.M."/>
            <person name="Lanz C."/>
            <person name="Schuster S.C."/>
            <person name="Wang J."/>
            <person name="Li S."/>
            <person name="Huang X."/>
            <person name="Cai T."/>
            <person name="Yu Z."/>
            <person name="Luo J."/>
            <person name="Zhao J."/>
            <person name="Bryant D.A."/>
        </authorList>
    </citation>
    <scope>NUCLEOTIDE SEQUENCE [LARGE SCALE GENOMIC DNA]</scope>
    <source>
        <strain>ATCC 27264 / PCC 7002 / PR-6</strain>
    </source>
</reference>
<protein>
    <recommendedName>
        <fullName evidence="1">Protein-L-isoaspartate O-methyltransferase</fullName>
        <ecNumber evidence="1">2.1.1.77</ecNumber>
    </recommendedName>
    <alternativeName>
        <fullName evidence="1">L-isoaspartyl protein carboxyl methyltransferase</fullName>
    </alternativeName>
    <alternativeName>
        <fullName evidence="1">Protein L-isoaspartyl methyltransferase</fullName>
    </alternativeName>
    <alternativeName>
        <fullName evidence="1">Protein-beta-aspartate methyltransferase</fullName>
        <shortName evidence="1">PIMT</shortName>
    </alternativeName>
</protein>
<accession>B1XQE1</accession>